<proteinExistence type="evidence at transcript level"/>
<accession>Q9CWT6</accession>
<accession>Q0VBM0</accession>
<accession>Q3TQM0</accession>
<reference key="1">
    <citation type="journal article" date="2005" name="Science">
        <title>The transcriptional landscape of the mammalian genome.</title>
        <authorList>
            <person name="Carninci P."/>
            <person name="Kasukawa T."/>
            <person name="Katayama S."/>
            <person name="Gough J."/>
            <person name="Frith M.C."/>
            <person name="Maeda N."/>
            <person name="Oyama R."/>
            <person name="Ravasi T."/>
            <person name="Lenhard B."/>
            <person name="Wells C."/>
            <person name="Kodzius R."/>
            <person name="Shimokawa K."/>
            <person name="Bajic V.B."/>
            <person name="Brenner S.E."/>
            <person name="Batalov S."/>
            <person name="Forrest A.R."/>
            <person name="Zavolan M."/>
            <person name="Davis M.J."/>
            <person name="Wilming L.G."/>
            <person name="Aidinis V."/>
            <person name="Allen J.E."/>
            <person name="Ambesi-Impiombato A."/>
            <person name="Apweiler R."/>
            <person name="Aturaliya R.N."/>
            <person name="Bailey T.L."/>
            <person name="Bansal M."/>
            <person name="Baxter L."/>
            <person name="Beisel K.W."/>
            <person name="Bersano T."/>
            <person name="Bono H."/>
            <person name="Chalk A.M."/>
            <person name="Chiu K.P."/>
            <person name="Choudhary V."/>
            <person name="Christoffels A."/>
            <person name="Clutterbuck D.R."/>
            <person name="Crowe M.L."/>
            <person name="Dalla E."/>
            <person name="Dalrymple B.P."/>
            <person name="de Bono B."/>
            <person name="Della Gatta G."/>
            <person name="di Bernardo D."/>
            <person name="Down T."/>
            <person name="Engstrom P."/>
            <person name="Fagiolini M."/>
            <person name="Faulkner G."/>
            <person name="Fletcher C.F."/>
            <person name="Fukushima T."/>
            <person name="Furuno M."/>
            <person name="Futaki S."/>
            <person name="Gariboldi M."/>
            <person name="Georgii-Hemming P."/>
            <person name="Gingeras T.R."/>
            <person name="Gojobori T."/>
            <person name="Green R.E."/>
            <person name="Gustincich S."/>
            <person name="Harbers M."/>
            <person name="Hayashi Y."/>
            <person name="Hensch T.K."/>
            <person name="Hirokawa N."/>
            <person name="Hill D."/>
            <person name="Huminiecki L."/>
            <person name="Iacono M."/>
            <person name="Ikeo K."/>
            <person name="Iwama A."/>
            <person name="Ishikawa T."/>
            <person name="Jakt M."/>
            <person name="Kanapin A."/>
            <person name="Katoh M."/>
            <person name="Kawasawa Y."/>
            <person name="Kelso J."/>
            <person name="Kitamura H."/>
            <person name="Kitano H."/>
            <person name="Kollias G."/>
            <person name="Krishnan S.P."/>
            <person name="Kruger A."/>
            <person name="Kummerfeld S.K."/>
            <person name="Kurochkin I.V."/>
            <person name="Lareau L.F."/>
            <person name="Lazarevic D."/>
            <person name="Lipovich L."/>
            <person name="Liu J."/>
            <person name="Liuni S."/>
            <person name="McWilliam S."/>
            <person name="Madan Babu M."/>
            <person name="Madera M."/>
            <person name="Marchionni L."/>
            <person name="Matsuda H."/>
            <person name="Matsuzawa S."/>
            <person name="Miki H."/>
            <person name="Mignone F."/>
            <person name="Miyake S."/>
            <person name="Morris K."/>
            <person name="Mottagui-Tabar S."/>
            <person name="Mulder N."/>
            <person name="Nakano N."/>
            <person name="Nakauchi H."/>
            <person name="Ng P."/>
            <person name="Nilsson R."/>
            <person name="Nishiguchi S."/>
            <person name="Nishikawa S."/>
            <person name="Nori F."/>
            <person name="Ohara O."/>
            <person name="Okazaki Y."/>
            <person name="Orlando V."/>
            <person name="Pang K.C."/>
            <person name="Pavan W.J."/>
            <person name="Pavesi G."/>
            <person name="Pesole G."/>
            <person name="Petrovsky N."/>
            <person name="Piazza S."/>
            <person name="Reed J."/>
            <person name="Reid J.F."/>
            <person name="Ring B.Z."/>
            <person name="Ringwald M."/>
            <person name="Rost B."/>
            <person name="Ruan Y."/>
            <person name="Salzberg S.L."/>
            <person name="Sandelin A."/>
            <person name="Schneider C."/>
            <person name="Schoenbach C."/>
            <person name="Sekiguchi K."/>
            <person name="Semple C.A."/>
            <person name="Seno S."/>
            <person name="Sessa L."/>
            <person name="Sheng Y."/>
            <person name="Shibata Y."/>
            <person name="Shimada H."/>
            <person name="Shimada K."/>
            <person name="Silva D."/>
            <person name="Sinclair B."/>
            <person name="Sperling S."/>
            <person name="Stupka E."/>
            <person name="Sugiura K."/>
            <person name="Sultana R."/>
            <person name="Takenaka Y."/>
            <person name="Taki K."/>
            <person name="Tammoja K."/>
            <person name="Tan S.L."/>
            <person name="Tang S."/>
            <person name="Taylor M.S."/>
            <person name="Tegner J."/>
            <person name="Teichmann S.A."/>
            <person name="Ueda H.R."/>
            <person name="van Nimwegen E."/>
            <person name="Verardo R."/>
            <person name="Wei C.L."/>
            <person name="Yagi K."/>
            <person name="Yamanishi H."/>
            <person name="Zabarovsky E."/>
            <person name="Zhu S."/>
            <person name="Zimmer A."/>
            <person name="Hide W."/>
            <person name="Bult C."/>
            <person name="Grimmond S.M."/>
            <person name="Teasdale R.D."/>
            <person name="Liu E.T."/>
            <person name="Brusic V."/>
            <person name="Quackenbush J."/>
            <person name="Wahlestedt C."/>
            <person name="Mattick J.S."/>
            <person name="Hume D.A."/>
            <person name="Kai C."/>
            <person name="Sasaki D."/>
            <person name="Tomaru Y."/>
            <person name="Fukuda S."/>
            <person name="Kanamori-Katayama M."/>
            <person name="Suzuki M."/>
            <person name="Aoki J."/>
            <person name="Arakawa T."/>
            <person name="Iida J."/>
            <person name="Imamura K."/>
            <person name="Itoh M."/>
            <person name="Kato T."/>
            <person name="Kawaji H."/>
            <person name="Kawagashira N."/>
            <person name="Kawashima T."/>
            <person name="Kojima M."/>
            <person name="Kondo S."/>
            <person name="Konno H."/>
            <person name="Nakano K."/>
            <person name="Ninomiya N."/>
            <person name="Nishio T."/>
            <person name="Okada M."/>
            <person name="Plessy C."/>
            <person name="Shibata K."/>
            <person name="Shiraki T."/>
            <person name="Suzuki S."/>
            <person name="Tagami M."/>
            <person name="Waki K."/>
            <person name="Watahiki A."/>
            <person name="Okamura-Oho Y."/>
            <person name="Suzuki H."/>
            <person name="Kawai J."/>
            <person name="Hayashizaki Y."/>
        </authorList>
    </citation>
    <scope>NUCLEOTIDE SEQUENCE [LARGE SCALE MRNA]</scope>
    <source>
        <strain>C57BL/6J</strain>
        <tissue>Corpora quadrigemina</tissue>
        <tissue>Embryonic stem cell</tissue>
    </source>
</reference>
<reference key="2">
    <citation type="journal article" date="2004" name="Genome Res.">
        <title>The status, quality, and expansion of the NIH full-length cDNA project: the Mammalian Gene Collection (MGC).</title>
        <authorList>
            <consortium name="The MGC Project Team"/>
        </authorList>
    </citation>
    <scope>NUCLEOTIDE SEQUENCE [LARGE SCALE MRNA]</scope>
    <source>
        <tissue>Brain</tissue>
    </source>
</reference>
<organism>
    <name type="scientific">Mus musculus</name>
    <name type="common">Mouse</name>
    <dbReference type="NCBI Taxonomy" id="10090"/>
    <lineage>
        <taxon>Eukaryota</taxon>
        <taxon>Metazoa</taxon>
        <taxon>Chordata</taxon>
        <taxon>Craniata</taxon>
        <taxon>Vertebrata</taxon>
        <taxon>Euteleostomi</taxon>
        <taxon>Mammalia</taxon>
        <taxon>Eutheria</taxon>
        <taxon>Euarchontoglires</taxon>
        <taxon>Glires</taxon>
        <taxon>Rodentia</taxon>
        <taxon>Myomorpha</taxon>
        <taxon>Muroidea</taxon>
        <taxon>Muridae</taxon>
        <taxon>Murinae</taxon>
        <taxon>Mus</taxon>
        <taxon>Mus</taxon>
    </lineage>
</organism>
<evidence type="ECO:0000250" key="1">
    <source>
        <dbReference type="UniProtKB" id="Q9NUL7"/>
    </source>
</evidence>
<evidence type="ECO:0000255" key="2"/>
<evidence type="ECO:0000255" key="3">
    <source>
        <dbReference type="PROSITE-ProRule" id="PRU00541"/>
    </source>
</evidence>
<evidence type="ECO:0000255" key="4">
    <source>
        <dbReference type="PROSITE-ProRule" id="PRU00542"/>
    </source>
</evidence>
<evidence type="ECO:0000305" key="5"/>
<name>DDX28_MOUSE</name>
<dbReference type="EC" id="3.6.4.13"/>
<dbReference type="EMBL" id="AK010396">
    <property type="protein sequence ID" value="BAB26907.1"/>
    <property type="molecule type" value="mRNA"/>
</dbReference>
<dbReference type="EMBL" id="AK163480">
    <property type="protein sequence ID" value="BAE37362.1"/>
    <property type="molecule type" value="mRNA"/>
</dbReference>
<dbReference type="EMBL" id="BC120556">
    <property type="protein sequence ID" value="AAI20557.1"/>
    <property type="molecule type" value="mRNA"/>
</dbReference>
<dbReference type="EMBL" id="BC120582">
    <property type="protein sequence ID" value="AAI20583.1"/>
    <property type="molecule type" value="mRNA"/>
</dbReference>
<dbReference type="CCDS" id="CCDS22626.1"/>
<dbReference type="RefSeq" id="NP_082314.2">
    <property type="nucleotide sequence ID" value="NM_028038.3"/>
</dbReference>
<dbReference type="SMR" id="Q9CWT6"/>
<dbReference type="BioGRID" id="215075">
    <property type="interactions" value="1"/>
</dbReference>
<dbReference type="FunCoup" id="Q9CWT6">
    <property type="interactions" value="1451"/>
</dbReference>
<dbReference type="STRING" id="10090.ENSMUSP00000058950"/>
<dbReference type="GlyGen" id="Q9CWT6">
    <property type="glycosylation" value="1 site, 1 O-linked glycan (1 site)"/>
</dbReference>
<dbReference type="iPTMnet" id="Q9CWT6"/>
<dbReference type="PhosphoSitePlus" id="Q9CWT6"/>
<dbReference type="PaxDb" id="10090-ENSMUSP00000058950"/>
<dbReference type="PeptideAtlas" id="Q9CWT6"/>
<dbReference type="ProteomicsDB" id="279325"/>
<dbReference type="Pumba" id="Q9CWT6"/>
<dbReference type="Antibodypedia" id="29712">
    <property type="antibodies" value="155 antibodies from 23 providers"/>
</dbReference>
<dbReference type="DNASU" id="71986"/>
<dbReference type="Ensembl" id="ENSMUST00000058579.7">
    <property type="protein sequence ID" value="ENSMUSP00000058950.6"/>
    <property type="gene ID" value="ENSMUSG00000045538.7"/>
</dbReference>
<dbReference type="GeneID" id="71986"/>
<dbReference type="KEGG" id="mmu:71986"/>
<dbReference type="UCSC" id="uc009nez.2">
    <property type="organism name" value="mouse"/>
</dbReference>
<dbReference type="AGR" id="MGI:1919236"/>
<dbReference type="CTD" id="55794"/>
<dbReference type="MGI" id="MGI:1919236">
    <property type="gene designation" value="Ddx28"/>
</dbReference>
<dbReference type="VEuPathDB" id="HostDB:ENSMUSG00000045538"/>
<dbReference type="eggNOG" id="KOG0330">
    <property type="taxonomic scope" value="Eukaryota"/>
</dbReference>
<dbReference type="GeneTree" id="ENSGT00940000161738"/>
<dbReference type="HOGENOM" id="CLU_003041_1_3_1"/>
<dbReference type="InParanoid" id="Q9CWT6"/>
<dbReference type="OMA" id="NGDMLMK"/>
<dbReference type="OrthoDB" id="10256233at2759"/>
<dbReference type="PhylomeDB" id="Q9CWT6"/>
<dbReference type="TreeFam" id="TF324977"/>
<dbReference type="BioGRID-ORCS" id="71986">
    <property type="hits" value="22 hits in 84 CRISPR screens"/>
</dbReference>
<dbReference type="ChiTaRS" id="Ddx28">
    <property type="organism name" value="mouse"/>
</dbReference>
<dbReference type="PRO" id="PR:Q9CWT6"/>
<dbReference type="Proteomes" id="UP000000589">
    <property type="component" value="Chromosome 8"/>
</dbReference>
<dbReference type="RNAct" id="Q9CWT6">
    <property type="molecule type" value="protein"/>
</dbReference>
<dbReference type="Bgee" id="ENSMUSG00000045538">
    <property type="expression patterns" value="Expressed in manus and 214 other cell types or tissues"/>
</dbReference>
<dbReference type="GO" id="GO:0005829">
    <property type="term" value="C:cytosol"/>
    <property type="evidence" value="ECO:0007669"/>
    <property type="project" value="Ensembl"/>
</dbReference>
<dbReference type="GO" id="GO:0042645">
    <property type="term" value="C:mitochondrial nucleoid"/>
    <property type="evidence" value="ECO:0000250"/>
    <property type="project" value="UniProtKB"/>
</dbReference>
<dbReference type="GO" id="GO:0005739">
    <property type="term" value="C:mitochondrion"/>
    <property type="evidence" value="ECO:0007005"/>
    <property type="project" value="MGI"/>
</dbReference>
<dbReference type="GO" id="GO:0005730">
    <property type="term" value="C:nucleolus"/>
    <property type="evidence" value="ECO:0007669"/>
    <property type="project" value="Ensembl"/>
</dbReference>
<dbReference type="GO" id="GO:0005654">
    <property type="term" value="C:nucleoplasm"/>
    <property type="evidence" value="ECO:0007669"/>
    <property type="project" value="Ensembl"/>
</dbReference>
<dbReference type="GO" id="GO:0035770">
    <property type="term" value="C:ribonucleoprotein granule"/>
    <property type="evidence" value="ECO:0000250"/>
    <property type="project" value="UniProtKB"/>
</dbReference>
<dbReference type="GO" id="GO:0005524">
    <property type="term" value="F:ATP binding"/>
    <property type="evidence" value="ECO:0007669"/>
    <property type="project" value="UniProtKB-KW"/>
</dbReference>
<dbReference type="GO" id="GO:0016887">
    <property type="term" value="F:ATP hydrolysis activity"/>
    <property type="evidence" value="ECO:0007669"/>
    <property type="project" value="RHEA"/>
</dbReference>
<dbReference type="GO" id="GO:0003724">
    <property type="term" value="F:RNA helicase activity"/>
    <property type="evidence" value="ECO:0007669"/>
    <property type="project" value="UniProtKB-EC"/>
</dbReference>
<dbReference type="GO" id="GO:0019843">
    <property type="term" value="F:rRNA binding"/>
    <property type="evidence" value="ECO:0000250"/>
    <property type="project" value="UniProtKB"/>
</dbReference>
<dbReference type="GO" id="GO:1902775">
    <property type="term" value="P:mitochondrial large ribosomal subunit assembly"/>
    <property type="evidence" value="ECO:0000250"/>
    <property type="project" value="UniProtKB"/>
</dbReference>
<dbReference type="CDD" id="cd18787">
    <property type="entry name" value="SF2_C_DEAD"/>
    <property type="match status" value="1"/>
</dbReference>
<dbReference type="FunFam" id="3.40.50.300:FF:002415">
    <property type="entry name" value="Probable ATP-dependent RNA helicase DDX28"/>
    <property type="match status" value="1"/>
</dbReference>
<dbReference type="FunFam" id="3.40.50.300:FF:002529">
    <property type="entry name" value="Probable ATP-dependent RNA helicase DDX28"/>
    <property type="match status" value="1"/>
</dbReference>
<dbReference type="Gene3D" id="3.40.50.300">
    <property type="entry name" value="P-loop containing nucleotide triphosphate hydrolases"/>
    <property type="match status" value="2"/>
</dbReference>
<dbReference type="InterPro" id="IPR011545">
    <property type="entry name" value="DEAD/DEAH_box_helicase_dom"/>
</dbReference>
<dbReference type="InterPro" id="IPR014001">
    <property type="entry name" value="Helicase_ATP-bd"/>
</dbReference>
<dbReference type="InterPro" id="IPR001650">
    <property type="entry name" value="Helicase_C-like"/>
</dbReference>
<dbReference type="InterPro" id="IPR027417">
    <property type="entry name" value="P-loop_NTPase"/>
</dbReference>
<dbReference type="InterPro" id="IPR014014">
    <property type="entry name" value="RNA_helicase_DEAD_Q_motif"/>
</dbReference>
<dbReference type="PANTHER" id="PTHR47960">
    <property type="entry name" value="DEAD-BOX ATP-DEPENDENT RNA HELICASE 50"/>
    <property type="match status" value="1"/>
</dbReference>
<dbReference type="Pfam" id="PF00270">
    <property type="entry name" value="DEAD"/>
    <property type="match status" value="1"/>
</dbReference>
<dbReference type="Pfam" id="PF00271">
    <property type="entry name" value="Helicase_C"/>
    <property type="match status" value="1"/>
</dbReference>
<dbReference type="SMART" id="SM00487">
    <property type="entry name" value="DEXDc"/>
    <property type="match status" value="1"/>
</dbReference>
<dbReference type="SMART" id="SM00490">
    <property type="entry name" value="HELICc"/>
    <property type="match status" value="1"/>
</dbReference>
<dbReference type="SUPFAM" id="SSF52540">
    <property type="entry name" value="P-loop containing nucleoside triphosphate hydrolases"/>
    <property type="match status" value="1"/>
</dbReference>
<dbReference type="PROSITE" id="PS51192">
    <property type="entry name" value="HELICASE_ATP_BIND_1"/>
    <property type="match status" value="1"/>
</dbReference>
<dbReference type="PROSITE" id="PS51194">
    <property type="entry name" value="HELICASE_CTER"/>
    <property type="match status" value="1"/>
</dbReference>
<dbReference type="PROSITE" id="PS51195">
    <property type="entry name" value="Q_MOTIF"/>
    <property type="match status" value="1"/>
</dbReference>
<protein>
    <recommendedName>
        <fullName>Probable ATP-dependent RNA helicase DDX28</fullName>
        <ecNumber>3.6.4.13</ecNumber>
    </recommendedName>
    <alternativeName>
        <fullName>Mitochondrial DEAD box protein 28</fullName>
    </alternativeName>
</protein>
<sequence length="540" mass="59515">MALAGPSRLLALAVRLLLEPRRNLVVRGSDQSLPVVRVPRALQRRQEQRQSGRGSLQRPVLVRPGPLLVSARRPELNQPARLTLGRWERAPLASRGWKHRRSRQDHFSIERVQQEAPALRNLSSRGSFVDLGLEPRVLLALQEAVPEVVQPTSVQSKTIPPLLRGRHLLCAAETGSGKTLSYLLPLFQRLLRGSDLDSRSFTAPRGLVLVPSRELAEQVQAVAQSLGGYLGLQVIELGGGLGMSRLKLQLYRRPAADVLVATPGALWKALKSQLISLQHLNFIVLDEVDTLLDESFLELVDYILEKSPIAESPAELEDPFNPKAQLVLVGATFPEGLNQLLSKVTSPDSLTTITSSKLHCLMPHVRQTFMRLKGADKVTELVQILKQQDKASKTEPSGTVLVFCNSASTVNWLGYILDDHKIQHLRLQGQMPASMRAGIFQSFQKGSQNILVCTDIASRGLDSVHVEVVINYDFPPTLQDYIHRAGRVGRVGSEVPGSVISFVTHPWDVSLVQKIELAARRRRSLPGLASSVGDPLPQKA</sequence>
<keyword id="KW-0067">ATP-binding</keyword>
<keyword id="KW-0347">Helicase</keyword>
<keyword id="KW-0378">Hydrolase</keyword>
<keyword id="KW-0496">Mitochondrion</keyword>
<keyword id="KW-1135">Mitochondrion nucleoid</keyword>
<keyword id="KW-0547">Nucleotide-binding</keyword>
<keyword id="KW-0539">Nucleus</keyword>
<keyword id="KW-1185">Reference proteome</keyword>
<keyword id="KW-0690">Ribosome biogenesis</keyword>
<keyword id="KW-0694">RNA-binding</keyword>
<keyword id="KW-0699">rRNA-binding</keyword>
<comment type="function">
    <text evidence="1">Plays an essential role in facilitating the proper assembly of the mitochondrial large ribosomal subunit and its helicase activity is essential for this function. May be involved in RNA processing or transport. Has RNA and Mg(2+)-dependent ATPase activity (By similarity).</text>
</comment>
<comment type="catalytic activity">
    <reaction>
        <text>ATP + H2O = ADP + phosphate + H(+)</text>
        <dbReference type="Rhea" id="RHEA:13065"/>
        <dbReference type="ChEBI" id="CHEBI:15377"/>
        <dbReference type="ChEBI" id="CHEBI:15378"/>
        <dbReference type="ChEBI" id="CHEBI:30616"/>
        <dbReference type="ChEBI" id="CHEBI:43474"/>
        <dbReference type="ChEBI" id="CHEBI:456216"/>
        <dbReference type="EC" id="3.6.4.13"/>
    </reaction>
</comment>
<comment type="subunit">
    <text evidence="1">Monomer. Found in a complex with GRSF1, DHX30, FASTKD2 and FASTKD5. Associates with the 16S mitochondrial rRNA (16S mt-rRNA) and with the mitochondrial ribosome large subunit (39S).</text>
</comment>
<comment type="subcellular location">
    <subcellularLocation>
        <location evidence="1">Nucleus</location>
    </subcellularLocation>
    <subcellularLocation>
        <location evidence="1">Mitochondrion</location>
    </subcellularLocation>
    <subcellularLocation>
        <location evidence="1">Mitochondrion matrix</location>
        <location evidence="1">Mitochondrion nucleoid</location>
    </subcellularLocation>
    <subcellularLocation>
        <location evidence="1">Mitochondrion matrix</location>
    </subcellularLocation>
    <text evidence="1">Transported between these two compartments. Nuclear localization depends on active RNA polymerase II transcription. Localizes to mitochondrial RNA granules found in close proximity to the mitochondrial nucleoids (By similarity).</text>
</comment>
<comment type="similarity">
    <text evidence="5">Belongs to the DEAD box helicase family.</text>
</comment>
<feature type="chain" id="PRO_0000055035" description="Probable ATP-dependent RNA helicase DDX28">
    <location>
        <begin position="1"/>
        <end position="540"/>
    </location>
</feature>
<feature type="domain" description="Helicase ATP-binding" evidence="3">
    <location>
        <begin position="159"/>
        <end position="351"/>
    </location>
</feature>
<feature type="domain" description="Helicase C-terminal" evidence="4">
    <location>
        <begin position="377"/>
        <end position="536"/>
    </location>
</feature>
<feature type="short sequence motif" description="Mitochondrial targeting signal" evidence="2">
    <location>
        <begin position="3"/>
        <end position="18"/>
    </location>
</feature>
<feature type="short sequence motif" description="Q motif">
    <location>
        <begin position="126"/>
        <end position="156"/>
    </location>
</feature>
<feature type="short sequence motif" description="Nuclear export signal" evidence="2">
    <location>
        <begin position="180"/>
        <end position="191"/>
    </location>
</feature>
<feature type="short sequence motif" description="DEAD">
    <location>
        <begin position="286"/>
        <end position="289"/>
    </location>
</feature>
<feature type="short sequence motif" description="Nuclear localization signal" evidence="2">
    <location>
        <begin position="520"/>
        <end position="523"/>
    </location>
</feature>
<feature type="binding site" evidence="3">
    <location>
        <begin position="172"/>
        <end position="179"/>
    </location>
    <ligand>
        <name>ATP</name>
        <dbReference type="ChEBI" id="CHEBI:30616"/>
    </ligand>
</feature>
<feature type="sequence conflict" description="In Ref. 1; BAB26907." evidence="5" ref="1">
    <original>A</original>
    <variation>V</variation>
    <location>
        <position position="13"/>
    </location>
</feature>
<gene>
    <name type="primary">Ddx28</name>
</gene>